<feature type="chain" id="PRO_0000369020" description="ATP synthase subunit b'">
    <location>
        <begin position="1"/>
        <end position="153"/>
    </location>
</feature>
<feature type="transmembrane region" description="Helical" evidence="1">
    <location>
        <begin position="20"/>
        <end position="40"/>
    </location>
</feature>
<organism>
    <name type="scientific">Prochlorococcus marinus (strain SARG / CCMP1375 / SS120)</name>
    <dbReference type="NCBI Taxonomy" id="167539"/>
    <lineage>
        <taxon>Bacteria</taxon>
        <taxon>Bacillati</taxon>
        <taxon>Cyanobacteriota</taxon>
        <taxon>Cyanophyceae</taxon>
        <taxon>Synechococcales</taxon>
        <taxon>Prochlorococcaceae</taxon>
        <taxon>Prochlorococcus</taxon>
    </lineage>
</organism>
<dbReference type="EMBL" id="AE017126">
    <property type="protein sequence ID" value="AAQ00651.1"/>
    <property type="molecule type" value="Genomic_DNA"/>
</dbReference>
<dbReference type="RefSeq" id="NP_875998.1">
    <property type="nucleotide sequence ID" value="NC_005042.1"/>
</dbReference>
<dbReference type="RefSeq" id="WP_011125757.1">
    <property type="nucleotide sequence ID" value="NC_005042.1"/>
</dbReference>
<dbReference type="SMR" id="Q7VA60"/>
<dbReference type="STRING" id="167539.Pro_1607"/>
<dbReference type="EnsemblBacteria" id="AAQ00651">
    <property type="protein sequence ID" value="AAQ00651"/>
    <property type="gene ID" value="Pro_1607"/>
</dbReference>
<dbReference type="KEGG" id="pma:Pro_1607"/>
<dbReference type="PATRIC" id="fig|167539.5.peg.1698"/>
<dbReference type="eggNOG" id="COG0711">
    <property type="taxonomic scope" value="Bacteria"/>
</dbReference>
<dbReference type="HOGENOM" id="CLU_079215_9_0_3"/>
<dbReference type="OrthoDB" id="426571at2"/>
<dbReference type="Proteomes" id="UP000001420">
    <property type="component" value="Chromosome"/>
</dbReference>
<dbReference type="GO" id="GO:0031676">
    <property type="term" value="C:plasma membrane-derived thylakoid membrane"/>
    <property type="evidence" value="ECO:0007669"/>
    <property type="project" value="UniProtKB-SubCell"/>
</dbReference>
<dbReference type="GO" id="GO:0045259">
    <property type="term" value="C:proton-transporting ATP synthase complex"/>
    <property type="evidence" value="ECO:0007669"/>
    <property type="project" value="UniProtKB-KW"/>
</dbReference>
<dbReference type="GO" id="GO:0046933">
    <property type="term" value="F:proton-transporting ATP synthase activity, rotational mechanism"/>
    <property type="evidence" value="ECO:0007669"/>
    <property type="project" value="UniProtKB-UniRule"/>
</dbReference>
<dbReference type="GO" id="GO:0046961">
    <property type="term" value="F:proton-transporting ATPase activity, rotational mechanism"/>
    <property type="evidence" value="ECO:0007669"/>
    <property type="project" value="TreeGrafter"/>
</dbReference>
<dbReference type="CDD" id="cd06503">
    <property type="entry name" value="ATP-synt_Fo_b"/>
    <property type="match status" value="1"/>
</dbReference>
<dbReference type="Gene3D" id="1.20.5.620">
    <property type="entry name" value="F1F0 ATP synthase subunit B, membrane domain"/>
    <property type="match status" value="1"/>
</dbReference>
<dbReference type="HAMAP" id="MF_01398">
    <property type="entry name" value="ATP_synth_b_bprime"/>
    <property type="match status" value="1"/>
</dbReference>
<dbReference type="HAMAP" id="MF_01399">
    <property type="entry name" value="ATP_synth_bprime"/>
    <property type="match status" value="1"/>
</dbReference>
<dbReference type="InterPro" id="IPR034679">
    <property type="entry name" value="ATP_synth_b"/>
</dbReference>
<dbReference type="InterPro" id="IPR028987">
    <property type="entry name" value="ATP_synth_B-like_membr_sf"/>
</dbReference>
<dbReference type="InterPro" id="IPR002146">
    <property type="entry name" value="ATP_synth_b/b'su_bac/chlpt"/>
</dbReference>
<dbReference type="InterPro" id="IPR050059">
    <property type="entry name" value="ATP_synthase_B_chain"/>
</dbReference>
<dbReference type="NCBIfam" id="NF005607">
    <property type="entry name" value="PRK07353.1"/>
    <property type="match status" value="1"/>
</dbReference>
<dbReference type="PANTHER" id="PTHR33445">
    <property type="entry name" value="ATP SYNTHASE SUBUNIT B', CHLOROPLASTIC"/>
    <property type="match status" value="1"/>
</dbReference>
<dbReference type="PANTHER" id="PTHR33445:SF2">
    <property type="entry name" value="ATP SYNTHASE SUBUNIT B', CHLOROPLASTIC"/>
    <property type="match status" value="1"/>
</dbReference>
<dbReference type="Pfam" id="PF00430">
    <property type="entry name" value="ATP-synt_B"/>
    <property type="match status" value="1"/>
</dbReference>
<dbReference type="SUPFAM" id="SSF81573">
    <property type="entry name" value="F1F0 ATP synthase subunit B, membrane domain"/>
    <property type="match status" value="1"/>
</dbReference>
<evidence type="ECO:0000255" key="1">
    <source>
        <dbReference type="HAMAP-Rule" id="MF_01399"/>
    </source>
</evidence>
<sequence length="153" mass="17056">MTSLLLFGASEGGLFDFDATLPLMAAQVVLLTFILNALFFKPVGRVVEDREDYVLTSRAEAKKKLAEVEKLENDLKNQLKEARKAAQQVISEAEEDSEKLYKEALNLANSEANASREQARREIDSQRDSALKKLKSDSDKLGDLIVERLLAAK</sequence>
<keyword id="KW-0066">ATP synthesis</keyword>
<keyword id="KW-0138">CF(0)</keyword>
<keyword id="KW-0375">Hydrogen ion transport</keyword>
<keyword id="KW-0406">Ion transport</keyword>
<keyword id="KW-0472">Membrane</keyword>
<keyword id="KW-1185">Reference proteome</keyword>
<keyword id="KW-0793">Thylakoid</keyword>
<keyword id="KW-0812">Transmembrane</keyword>
<keyword id="KW-1133">Transmembrane helix</keyword>
<keyword id="KW-0813">Transport</keyword>
<proteinExistence type="inferred from homology"/>
<gene>
    <name evidence="1" type="primary">atpF2</name>
    <name evidence="1" type="synonym">atpG</name>
    <name type="ordered locus">Pro_1607</name>
</gene>
<name>ATPF2_PROMA</name>
<comment type="function">
    <text evidence="1">F(1)F(0) ATP synthase produces ATP from ADP in the presence of a proton or sodium gradient. F-type ATPases consist of two structural domains, F(1) containing the extramembraneous catalytic core and F(0) containing the membrane proton channel, linked together by a central stalk and a peripheral stalk. During catalysis, ATP synthesis in the catalytic domain of F(1) is coupled via a rotary mechanism of the central stalk subunits to proton translocation.</text>
</comment>
<comment type="function">
    <text evidence="1">Component of the F(0) channel, it forms part of the peripheral stalk, linking F(1) to F(0). The b'-subunit is a diverged and duplicated form of b found in plants and photosynthetic bacteria.</text>
</comment>
<comment type="subunit">
    <text evidence="1">F-type ATPases have 2 components, F(1) - the catalytic core - and F(0) - the membrane proton channel. F(1) has five subunits: alpha(3), beta(3), gamma(1), delta(1), epsilon(1). F(0) has four main subunits: a(1), b(1), b'(1) and c(10-14). The alpha and beta chains form an alternating ring which encloses part of the gamma chain. F(1) is attached to F(0) by a central stalk formed by the gamma and epsilon chains, while a peripheral stalk is formed by the delta, b and b' chains.</text>
</comment>
<comment type="subcellular location">
    <subcellularLocation>
        <location evidence="1">Cellular thylakoid membrane</location>
        <topology evidence="1">Single-pass membrane protein</topology>
    </subcellularLocation>
</comment>
<comment type="similarity">
    <text evidence="1">Belongs to the ATPase B chain family.</text>
</comment>
<accession>Q7VA60</accession>
<protein>
    <recommendedName>
        <fullName evidence="1">ATP synthase subunit b'</fullName>
    </recommendedName>
    <alternativeName>
        <fullName evidence="1">ATP synthase F(0) sector subunit b'</fullName>
    </alternativeName>
    <alternativeName>
        <fullName evidence="1">ATPase subunit II</fullName>
    </alternativeName>
    <alternativeName>
        <fullName evidence="1">F-type ATPase subunit b'</fullName>
        <shortName evidence="1">F-ATPase subunit b'</shortName>
    </alternativeName>
</protein>
<reference key="1">
    <citation type="journal article" date="2003" name="Proc. Natl. Acad. Sci. U.S.A.">
        <title>Genome sequence of the cyanobacterium Prochlorococcus marinus SS120, a nearly minimal oxyphototrophic genome.</title>
        <authorList>
            <person name="Dufresne A."/>
            <person name="Salanoubat M."/>
            <person name="Partensky F."/>
            <person name="Artiguenave F."/>
            <person name="Axmann I.M."/>
            <person name="Barbe V."/>
            <person name="Duprat S."/>
            <person name="Galperin M.Y."/>
            <person name="Koonin E.V."/>
            <person name="Le Gall F."/>
            <person name="Makarova K.S."/>
            <person name="Ostrowski M."/>
            <person name="Oztas S."/>
            <person name="Robert C."/>
            <person name="Rogozin I.B."/>
            <person name="Scanlan D.J."/>
            <person name="Tandeau de Marsac N."/>
            <person name="Weissenbach J."/>
            <person name="Wincker P."/>
            <person name="Wolf Y.I."/>
            <person name="Hess W.R."/>
        </authorList>
    </citation>
    <scope>NUCLEOTIDE SEQUENCE [LARGE SCALE GENOMIC DNA]</scope>
    <source>
        <strain>SARG / CCMP1375 / SS120</strain>
    </source>
</reference>